<sequence>MTVGLFGGSFNPPHGGHALVAEIAIRRLKLDQLWWMVTPGNPLKDSRELASLSERLRLSEEVAEDPRIKVTALEAAFHVRYTADTLALIRNANPDVYFVWVMGADNLASFHRWQRWREIAQNFPIAIIDRPGSTLSYLSSRMAQTFSDSRLDERYAPVLARRMPPAWTFIHGPRSSLSSTALRKVQLKKAPSKK</sequence>
<evidence type="ECO:0000255" key="1">
    <source>
        <dbReference type="HAMAP-Rule" id="MF_00244"/>
    </source>
</evidence>
<comment type="function">
    <text evidence="1">Catalyzes the reversible adenylation of nicotinate mononucleotide (NaMN) to nicotinic acid adenine dinucleotide (NaAD).</text>
</comment>
<comment type="catalytic activity">
    <reaction evidence="1">
        <text>nicotinate beta-D-ribonucleotide + ATP + H(+) = deamido-NAD(+) + diphosphate</text>
        <dbReference type="Rhea" id="RHEA:22860"/>
        <dbReference type="ChEBI" id="CHEBI:15378"/>
        <dbReference type="ChEBI" id="CHEBI:30616"/>
        <dbReference type="ChEBI" id="CHEBI:33019"/>
        <dbReference type="ChEBI" id="CHEBI:57502"/>
        <dbReference type="ChEBI" id="CHEBI:58437"/>
        <dbReference type="EC" id="2.7.7.18"/>
    </reaction>
</comment>
<comment type="pathway">
    <text evidence="1">Cofactor biosynthesis; NAD(+) biosynthesis; deamido-NAD(+) from nicotinate D-ribonucleotide: step 1/1.</text>
</comment>
<comment type="similarity">
    <text evidence="1">Belongs to the NadD family.</text>
</comment>
<gene>
    <name evidence="1" type="primary">nadD</name>
    <name type="ordered locus">BR1842</name>
    <name type="ordered locus">BS1330_I1836</name>
</gene>
<dbReference type="EC" id="2.7.7.18" evidence="1"/>
<dbReference type="EMBL" id="AE014291">
    <property type="protein sequence ID" value="AAN30737.1"/>
    <property type="molecule type" value="Genomic_DNA"/>
</dbReference>
<dbReference type="EMBL" id="CP002997">
    <property type="protein sequence ID" value="AEM19154.1"/>
    <property type="molecule type" value="Genomic_DNA"/>
</dbReference>
<dbReference type="SMR" id="Q8CY36"/>
<dbReference type="KEGG" id="bms:BR1842"/>
<dbReference type="KEGG" id="bsi:BS1330_I1836"/>
<dbReference type="PATRIC" id="fig|204722.22.peg.16"/>
<dbReference type="HOGENOM" id="CLU_069765_2_0_5"/>
<dbReference type="UniPathway" id="UPA00253">
    <property type="reaction ID" value="UER00332"/>
</dbReference>
<dbReference type="Proteomes" id="UP000007104">
    <property type="component" value="Chromosome I"/>
</dbReference>
<dbReference type="GO" id="GO:0005524">
    <property type="term" value="F:ATP binding"/>
    <property type="evidence" value="ECO:0007669"/>
    <property type="project" value="UniProtKB-KW"/>
</dbReference>
<dbReference type="GO" id="GO:0004515">
    <property type="term" value="F:nicotinate-nucleotide adenylyltransferase activity"/>
    <property type="evidence" value="ECO:0007669"/>
    <property type="project" value="UniProtKB-UniRule"/>
</dbReference>
<dbReference type="GO" id="GO:0009435">
    <property type="term" value="P:NAD biosynthetic process"/>
    <property type="evidence" value="ECO:0007669"/>
    <property type="project" value="UniProtKB-UniRule"/>
</dbReference>
<dbReference type="CDD" id="cd02165">
    <property type="entry name" value="NMNAT"/>
    <property type="match status" value="1"/>
</dbReference>
<dbReference type="Gene3D" id="3.40.50.620">
    <property type="entry name" value="HUPs"/>
    <property type="match status" value="1"/>
</dbReference>
<dbReference type="HAMAP" id="MF_00244">
    <property type="entry name" value="NaMN_adenylyltr"/>
    <property type="match status" value="1"/>
</dbReference>
<dbReference type="InterPro" id="IPR004821">
    <property type="entry name" value="Cyt_trans-like"/>
</dbReference>
<dbReference type="InterPro" id="IPR005248">
    <property type="entry name" value="NadD/NMNAT"/>
</dbReference>
<dbReference type="InterPro" id="IPR014729">
    <property type="entry name" value="Rossmann-like_a/b/a_fold"/>
</dbReference>
<dbReference type="NCBIfam" id="TIGR00482">
    <property type="entry name" value="nicotinate (nicotinamide) nucleotide adenylyltransferase"/>
    <property type="match status" value="1"/>
</dbReference>
<dbReference type="NCBIfam" id="NF000843">
    <property type="entry name" value="PRK00071.2-2"/>
    <property type="match status" value="1"/>
</dbReference>
<dbReference type="NCBIfam" id="NF000845">
    <property type="entry name" value="PRK00071.2-4"/>
    <property type="match status" value="1"/>
</dbReference>
<dbReference type="PANTHER" id="PTHR39321">
    <property type="entry name" value="NICOTINATE-NUCLEOTIDE ADENYLYLTRANSFERASE-RELATED"/>
    <property type="match status" value="1"/>
</dbReference>
<dbReference type="PANTHER" id="PTHR39321:SF3">
    <property type="entry name" value="PHOSPHOPANTETHEINE ADENYLYLTRANSFERASE"/>
    <property type="match status" value="1"/>
</dbReference>
<dbReference type="Pfam" id="PF01467">
    <property type="entry name" value="CTP_transf_like"/>
    <property type="match status" value="1"/>
</dbReference>
<dbReference type="SUPFAM" id="SSF52374">
    <property type="entry name" value="Nucleotidylyl transferase"/>
    <property type="match status" value="1"/>
</dbReference>
<keyword id="KW-0067">ATP-binding</keyword>
<keyword id="KW-0520">NAD</keyword>
<keyword id="KW-0547">Nucleotide-binding</keyword>
<keyword id="KW-0548">Nucleotidyltransferase</keyword>
<keyword id="KW-0662">Pyridine nucleotide biosynthesis</keyword>
<keyword id="KW-0808">Transferase</keyword>
<reference key="1">
    <citation type="journal article" date="2002" name="Proc. Natl. Acad. Sci. U.S.A.">
        <title>The Brucella suis genome reveals fundamental similarities between animal and plant pathogens and symbionts.</title>
        <authorList>
            <person name="Paulsen I.T."/>
            <person name="Seshadri R."/>
            <person name="Nelson K.E."/>
            <person name="Eisen J.A."/>
            <person name="Heidelberg J.F."/>
            <person name="Read T.D."/>
            <person name="Dodson R.J."/>
            <person name="Umayam L.A."/>
            <person name="Brinkac L.M."/>
            <person name="Beanan M.J."/>
            <person name="Daugherty S.C."/>
            <person name="DeBoy R.T."/>
            <person name="Durkin A.S."/>
            <person name="Kolonay J.F."/>
            <person name="Madupu R."/>
            <person name="Nelson W.C."/>
            <person name="Ayodeji B."/>
            <person name="Kraul M."/>
            <person name="Shetty J."/>
            <person name="Malek J.A."/>
            <person name="Van Aken S.E."/>
            <person name="Riedmuller S."/>
            <person name="Tettelin H."/>
            <person name="Gill S.R."/>
            <person name="White O."/>
            <person name="Salzberg S.L."/>
            <person name="Hoover D.L."/>
            <person name="Lindler L.E."/>
            <person name="Halling S.M."/>
            <person name="Boyle S.M."/>
            <person name="Fraser C.M."/>
        </authorList>
    </citation>
    <scope>NUCLEOTIDE SEQUENCE [LARGE SCALE GENOMIC DNA]</scope>
    <source>
        <strain>1330</strain>
    </source>
</reference>
<reference key="2">
    <citation type="journal article" date="2011" name="J. Bacteriol.">
        <title>Revised genome sequence of Brucella suis 1330.</title>
        <authorList>
            <person name="Tae H."/>
            <person name="Shallom S."/>
            <person name="Settlage R."/>
            <person name="Preston D."/>
            <person name="Adams L.G."/>
            <person name="Garner H.R."/>
        </authorList>
    </citation>
    <scope>NUCLEOTIDE SEQUENCE [LARGE SCALE GENOMIC DNA]</scope>
    <source>
        <strain>1330</strain>
    </source>
</reference>
<feature type="chain" id="PRO_0000181396" description="Probable nicotinate-nucleotide adenylyltransferase">
    <location>
        <begin position="1"/>
        <end position="194"/>
    </location>
</feature>
<proteinExistence type="inferred from homology"/>
<accession>Q8CY36</accession>
<accession>G0K7Q8</accession>
<name>NADD_BRUSU</name>
<protein>
    <recommendedName>
        <fullName evidence="1">Probable nicotinate-nucleotide adenylyltransferase</fullName>
        <ecNumber evidence="1">2.7.7.18</ecNumber>
    </recommendedName>
    <alternativeName>
        <fullName evidence="1">Deamido-NAD(+) diphosphorylase</fullName>
    </alternativeName>
    <alternativeName>
        <fullName evidence="1">Deamido-NAD(+) pyrophosphorylase</fullName>
    </alternativeName>
    <alternativeName>
        <fullName evidence="1">Nicotinate mononucleotide adenylyltransferase</fullName>
        <shortName evidence="1">NaMN adenylyltransferase</shortName>
    </alternativeName>
</protein>
<organism>
    <name type="scientific">Brucella suis biovar 1 (strain 1330)</name>
    <dbReference type="NCBI Taxonomy" id="204722"/>
    <lineage>
        <taxon>Bacteria</taxon>
        <taxon>Pseudomonadati</taxon>
        <taxon>Pseudomonadota</taxon>
        <taxon>Alphaproteobacteria</taxon>
        <taxon>Hyphomicrobiales</taxon>
        <taxon>Brucellaceae</taxon>
        <taxon>Brucella/Ochrobactrum group</taxon>
        <taxon>Brucella</taxon>
    </lineage>
</organism>